<protein>
    <recommendedName>
        <fullName>CD2-associated protein</fullName>
    </recommendedName>
    <alternativeName>
        <fullName>Adapter protein CMS</fullName>
    </alternativeName>
    <alternativeName>
        <fullName>Cas ligand with multiple SH3 domains</fullName>
    </alternativeName>
</protein>
<keyword id="KW-0002">3D-structure</keyword>
<keyword id="KW-0131">Cell cycle</keyword>
<keyword id="KW-0132">Cell division</keyword>
<keyword id="KW-0965">Cell junction</keyword>
<keyword id="KW-0966">Cell projection</keyword>
<keyword id="KW-0175">Coiled coil</keyword>
<keyword id="KW-0963">Cytoplasm</keyword>
<keyword id="KW-0206">Cytoskeleton</keyword>
<keyword id="KW-0945">Host-virus interaction</keyword>
<keyword id="KW-1017">Isopeptide bond</keyword>
<keyword id="KW-0498">Mitosis</keyword>
<keyword id="KW-0597">Phosphoprotein</keyword>
<keyword id="KW-1267">Proteomics identification</keyword>
<keyword id="KW-1185">Reference proteome</keyword>
<keyword id="KW-0677">Repeat</keyword>
<keyword id="KW-0728">SH3 domain</keyword>
<keyword id="KW-0729">SH3-binding</keyword>
<keyword id="KW-0832">Ubl conjugation</keyword>
<proteinExistence type="evidence at protein level"/>
<evidence type="ECO:0000250" key="1">
    <source>
        <dbReference type="UniProtKB" id="F1LRS8"/>
    </source>
</evidence>
<evidence type="ECO:0000250" key="2">
    <source>
        <dbReference type="UniProtKB" id="Q9JLQ0"/>
    </source>
</evidence>
<evidence type="ECO:0000255" key="3"/>
<evidence type="ECO:0000255" key="4">
    <source>
        <dbReference type="PROSITE-ProRule" id="PRU00192"/>
    </source>
</evidence>
<evidence type="ECO:0000256" key="5">
    <source>
        <dbReference type="SAM" id="MobiDB-lite"/>
    </source>
</evidence>
<evidence type="ECO:0000269" key="6">
    <source>
    </source>
</evidence>
<evidence type="ECO:0000269" key="7">
    <source>
    </source>
</evidence>
<evidence type="ECO:0000269" key="8">
    <source>
    </source>
</evidence>
<evidence type="ECO:0000269" key="9">
    <source>
    </source>
</evidence>
<evidence type="ECO:0000269" key="10">
    <source>
    </source>
</evidence>
<evidence type="ECO:0000269" key="11">
    <source>
    </source>
</evidence>
<evidence type="ECO:0000269" key="12">
    <source>
    </source>
</evidence>
<evidence type="ECO:0000269" key="13">
    <source>
    </source>
</evidence>
<evidence type="ECO:0000269" key="14">
    <source>
    </source>
</evidence>
<evidence type="ECO:0000269" key="15">
    <source>
    </source>
</evidence>
<evidence type="ECO:0000269" key="16">
    <source>
    </source>
</evidence>
<evidence type="ECO:0000269" key="17">
    <source>
    </source>
</evidence>
<evidence type="ECO:0000269" key="18">
    <source ref="30"/>
</evidence>
<evidence type="ECO:0000305" key="19"/>
<evidence type="ECO:0007744" key="20">
    <source>
    </source>
</evidence>
<evidence type="ECO:0007744" key="21">
    <source>
    </source>
</evidence>
<evidence type="ECO:0007744" key="22">
    <source>
    </source>
</evidence>
<evidence type="ECO:0007744" key="23">
    <source>
    </source>
</evidence>
<evidence type="ECO:0007744" key="24">
    <source>
    </source>
</evidence>
<evidence type="ECO:0007744" key="25">
    <source>
    </source>
</evidence>
<evidence type="ECO:0007744" key="26">
    <source>
    </source>
</evidence>
<evidence type="ECO:0007744" key="27">
    <source>
    </source>
</evidence>
<evidence type="ECO:0007744" key="28">
    <source>
    </source>
</evidence>
<evidence type="ECO:0007744" key="29">
    <source>
    </source>
</evidence>
<evidence type="ECO:0007829" key="30">
    <source>
        <dbReference type="PDB" id="3AA6"/>
    </source>
</evidence>
<evidence type="ECO:0007829" key="31">
    <source>
        <dbReference type="PDB" id="3U23"/>
    </source>
</evidence>
<evidence type="ECO:0007829" key="32">
    <source>
        <dbReference type="PDB" id="4WCI"/>
    </source>
</evidence>
<name>CD2AP_HUMAN</name>
<organism>
    <name type="scientific">Homo sapiens</name>
    <name type="common">Human</name>
    <dbReference type="NCBI Taxonomy" id="9606"/>
    <lineage>
        <taxon>Eukaryota</taxon>
        <taxon>Metazoa</taxon>
        <taxon>Chordata</taxon>
        <taxon>Craniata</taxon>
        <taxon>Vertebrata</taxon>
        <taxon>Euteleostomi</taxon>
        <taxon>Mammalia</taxon>
        <taxon>Eutheria</taxon>
        <taxon>Euarchontoglires</taxon>
        <taxon>Primates</taxon>
        <taxon>Haplorrhini</taxon>
        <taxon>Catarrhini</taxon>
        <taxon>Hominidae</taxon>
        <taxon>Homo</taxon>
    </lineage>
</organism>
<comment type="function">
    <text evidence="1 2 6 9 15">Seems to act as an adapter protein between membrane proteins and the actin cytoskeleton (PubMed:10339567). In collaboration with CBLC, modulates the rate of RET turnover and may act as regulatory checkpoint that limits the potency of GDNF on neuronal survival. Controls CBLC function, converting it from an inhibitor to a promoter of RET degradation (By similarity). May play a role in receptor clustering and cytoskeletal polarity in the junction between T-cell and antigen-presenting cell (By similarity). May anchor the podocyte slit diaphragm to the actin cytoskeleton in renal glomerolus. Also required for cytokinesis (PubMed:15800069). Plays a role in epithelial cell junctions formation (PubMed:22891260).</text>
</comment>
<comment type="subunit">
    <text evidence="6 7 9 10 11 12 13 14 15 18 19">Homodimer. Interacts with F-actin, PKD2, NPHS1 and NPHS2. Interacts with WTIP. Interacts with DDN; interaction is direct. Interacts (via SH3 2 domain) with CBL (via phosphorylated C-terminus). Interacts with BCAR1/p130Cas (via SH3 domain). Interacts with MVB12A and ARHGAP17. Interacts with ANLN, CD2 and CBLB. Interacts with PDCD6IP and TSG101. Interacts with RIN3. Interacts directly with RET (inactive) and CBLC; upon RET activation by GDNF suggested to dissociate from RET as CBLC:CD2AP complex (Probable) (PubMed:10339567, PubMed:11067845, PubMed:15800069, PubMed:16678097, PubMed:16895919, PubMed:17020880, PubMed:17853893, PubMed:18753381, Ref.30). Interacts with CGNL1 and SH3BP1; probably part of a complex at cell junctions (PubMed:22891260). Interacts with CAPZA1 (PubMed:22891260).</text>
</comment>
<comment type="subunit">
    <text evidence="17">(Microbial infection) Interacts (via SH3 domains) with Chikungunya virus non-structural protein 3 (via C-terminus); this interaction plays a role in initiation of viral replication.</text>
</comment>
<comment type="interaction">
    <interactant intactId="EBI-298152">
        <id>Q9Y5K6</id>
    </interactant>
    <interactant intactId="EBI-2623522">
        <id>Q8WV28</id>
        <label>BLNK</label>
    </interactant>
    <organismsDiffer>false</organismsDiffer>
    <experiments>2</experiments>
</comment>
<comment type="interaction">
    <interactant intactId="EBI-298152">
        <id>Q9Y5K6</id>
    </interactant>
    <interactant intactId="EBI-518228">
        <id>P22681</id>
        <label>CBL</label>
    </interactant>
    <organismsDiffer>false</organismsDiffer>
    <experiments>4</experiments>
</comment>
<comment type="interaction">
    <interactant intactId="EBI-298152">
        <id>Q9Y5K6</id>
    </interactant>
    <interactant intactId="EBI-744027">
        <id>Q13191</id>
        <label>CBLB</label>
    </interactant>
    <organismsDiffer>false</organismsDiffer>
    <experiments>11</experiments>
</comment>
<comment type="interaction">
    <interactant intactId="EBI-298152">
        <id>Q9Y5K6</id>
    </interactant>
    <interactant intactId="EBI-3912464">
        <id>P06729</id>
        <label>CD2</label>
    </interactant>
    <organismsDiffer>false</organismsDiffer>
    <experiments>4</experiments>
</comment>
<comment type="interaction">
    <interactant intactId="EBI-298152">
        <id>Q9Y5K6</id>
    </interactant>
    <interactant intactId="EBI-298152">
        <id>Q9Y5K6</id>
        <label>CD2AP</label>
    </interactant>
    <organismsDiffer>false</organismsDiffer>
    <experiments>3</experiments>
</comment>
<comment type="interaction">
    <interactant intactId="EBI-298152">
        <id>Q9Y5K6</id>
    </interactant>
    <interactant intactId="EBI-515315">
        <id>P06241</id>
        <label>FYN</label>
    </interactant>
    <organismsDiffer>false</organismsDiffer>
    <experiments>2</experiments>
</comment>
<comment type="interaction">
    <interactant intactId="EBI-298152">
        <id>Q9Y5K6</id>
    </interactant>
    <interactant intactId="EBI-401755">
        <id>P62993</id>
        <label>GRB2</label>
    </interactant>
    <organismsDiffer>false</organismsDiffer>
    <experiments>3</experiments>
</comment>
<comment type="interaction">
    <interactant intactId="EBI-298152">
        <id>Q9Y5K6</id>
    </interactant>
    <interactant intactId="EBI-297509">
        <id>P46940</id>
        <label>IQGAP1</label>
    </interactant>
    <organismsDiffer>false</organismsDiffer>
    <experiments>4</experiments>
</comment>
<comment type="interaction">
    <interactant intactId="EBI-298152">
        <id>Q9Y5K6</id>
    </interactant>
    <interactant intactId="EBI-310624">
        <id>Q8WUM4</id>
        <label>PDCD6IP</label>
    </interactant>
    <organismsDiffer>false</organismsDiffer>
    <experiments>3</experiments>
</comment>
<comment type="interaction">
    <interactant intactId="EBI-298152">
        <id>Q9Y5K6</id>
    </interactant>
    <interactant intactId="EBI-1570523">
        <id>Q8TB24</id>
        <label>RIN3</label>
    </interactant>
    <organismsDiffer>false</organismsDiffer>
    <experiments>3</experiments>
</comment>
<comment type="interaction">
    <interactant intactId="EBI-298152">
        <id>Q9Y5K6</id>
    </interactant>
    <interactant intactId="EBI-346595">
        <id>Q96B97</id>
        <label>SH3KBP1</label>
    </interactant>
    <organismsDiffer>false</organismsDiffer>
    <experiments>6</experiments>
</comment>
<comment type="interaction">
    <interactant intactId="EBI-298152">
        <id>Q9Y5K6</id>
    </interactant>
    <interactant intactId="EBI-346882">
        <id>Q99816</id>
        <label>TSG101</label>
    </interactant>
    <organismsDiffer>false</organismsDiffer>
    <experiments>2</experiments>
</comment>
<comment type="subcellular location">
    <subcellularLocation>
        <location evidence="9">Cytoplasm</location>
        <location evidence="9">Cytoskeleton</location>
    </subcellularLocation>
    <subcellularLocation>
        <location evidence="6">Cell projection</location>
        <location evidence="6">Ruffle</location>
    </subcellularLocation>
    <subcellularLocation>
        <location evidence="15">Cell junction</location>
    </subcellularLocation>
    <text evidence="2 6 9">Colocalizes with F-actin and BCAR1/p130Cas in membrane ruffles (PubMed:10339567). Located at podocyte slit diaphragm between podocyte foot processes (By similarity). During late anaphase and telophase, concentrates in the vicinity of the midzone microtubules and in the midbody in late telophase (PubMed:15800069).</text>
</comment>
<comment type="tissue specificity">
    <text>Widely expressed in fetal and adult tissues.</text>
</comment>
<comment type="domain">
    <text>The Pro-rich domain may mediate binding to SH3 domains.</text>
</comment>
<comment type="domain">
    <text evidence="6">Potential homodimerization is mediated by the coiled coil domain.</text>
</comment>
<comment type="PTM">
    <text evidence="6 7 9">Phosphorylated on tyrosine residues; probably by c-Abl, Fyn and c-Src.</text>
</comment>
<comment type="disease" evidence="8">
    <disease id="DI-01622">
        <name>Focal segmental glomerulosclerosis 3</name>
        <acronym>FSGS3</acronym>
        <description>A renal pathology defined by the presence of segmental sclerosis in glomeruli and resulting in proteinuria, reduced glomerular filtration rate and progressive decline in renal function. Renal insufficiency often progresses to end-stage renal disease, a highly morbid state requiring either dialysis therapy or kidney transplantation.</description>
        <dbReference type="MIM" id="607832"/>
    </disease>
    <text>Disease susceptibility is associated with variants affecting the gene represented in this entry.</text>
</comment>
<feature type="chain" id="PRO_0000089435" description="CD2-associated protein">
    <location>
        <begin position="1"/>
        <end position="639"/>
    </location>
</feature>
<feature type="domain" description="SH3 1; truncated" evidence="4">
    <location>
        <begin position="1"/>
        <end position="59"/>
    </location>
</feature>
<feature type="domain" description="SH3 2" evidence="4">
    <location>
        <begin position="108"/>
        <end position="167"/>
    </location>
</feature>
<feature type="domain" description="SH3 3" evidence="4">
    <location>
        <begin position="269"/>
        <end position="330"/>
    </location>
</feature>
<feature type="region of interest" description="Interaction with ANLN and localization to the midbody" evidence="9">
    <location>
        <begin position="1"/>
        <end position="175"/>
    </location>
</feature>
<feature type="region of interest" description="Disordered" evidence="5">
    <location>
        <begin position="168"/>
        <end position="209"/>
    </location>
</feature>
<feature type="region of interest" description="Disordered" evidence="5">
    <location>
        <begin position="227"/>
        <end position="256"/>
    </location>
</feature>
<feature type="region of interest" description="Disordered" evidence="5">
    <location>
        <begin position="333"/>
        <end position="428"/>
    </location>
</feature>
<feature type="coiled-coil region" evidence="3">
    <location>
        <begin position="577"/>
        <end position="638"/>
    </location>
</feature>
<feature type="short sequence motif" description="SH3-binding" evidence="3">
    <location>
        <begin position="336"/>
        <end position="352"/>
    </location>
</feature>
<feature type="short sequence motif" description="SH3-binding" evidence="3">
    <location>
        <begin position="378"/>
        <end position="397"/>
    </location>
</feature>
<feature type="short sequence motif" description="SH3-binding" evidence="3">
    <location>
        <begin position="410"/>
        <end position="422"/>
    </location>
</feature>
<feature type="compositionally biased region" description="Basic and acidic residues" evidence="5">
    <location>
        <begin position="168"/>
        <end position="177"/>
    </location>
</feature>
<feature type="compositionally biased region" description="Polar residues" evidence="5">
    <location>
        <begin position="195"/>
        <end position="207"/>
    </location>
</feature>
<feature type="compositionally biased region" description="Pro residues" evidence="5">
    <location>
        <begin position="341"/>
        <end position="351"/>
    </location>
</feature>
<feature type="compositionally biased region" description="Basic and acidic residues" evidence="5">
    <location>
        <begin position="356"/>
        <end position="379"/>
    </location>
</feature>
<feature type="compositionally biased region" description="Pro residues" evidence="5">
    <location>
        <begin position="385"/>
        <end position="395"/>
    </location>
</feature>
<feature type="modified residue" description="Phosphoserine" evidence="26">
    <location>
        <position position="67"/>
    </location>
</feature>
<feature type="modified residue" description="Phosphoserine" evidence="26">
    <location>
        <position position="80"/>
    </location>
</feature>
<feature type="modified residue" description="Phosphoserine" evidence="26">
    <location>
        <position position="86"/>
    </location>
</feature>
<feature type="modified residue" description="Phosphoserine" evidence="25 26">
    <location>
        <position position="224"/>
    </location>
</feature>
<feature type="modified residue" description="Phosphoserine" evidence="20 21 22 23 24 25 26 27">
    <location>
        <position position="458"/>
    </location>
</feature>
<feature type="modified residue" description="Phosphoserine" evidence="26 27">
    <location>
        <position position="463"/>
    </location>
</feature>
<feature type="modified residue" description="Phosphoserine" evidence="1">
    <location>
        <position position="469"/>
    </location>
</feature>
<feature type="modified residue" description="Phosphoserine" evidence="24 25 26">
    <location>
        <position position="510"/>
    </location>
</feature>
<feature type="modified residue" description="Phosphoserine" evidence="25 26">
    <location>
        <position position="514"/>
    </location>
</feature>
<feature type="modified residue" description="Phosphothreonine" evidence="26">
    <location>
        <position position="565"/>
    </location>
</feature>
<feature type="modified residue" description="Phosphoserine" evidence="26">
    <location>
        <position position="582"/>
    </location>
</feature>
<feature type="cross-link" description="Glycyl lysine isopeptide (Lys-Gly) (interchain with G-Cter in SUMO2)" evidence="28">
    <location>
        <position position="58"/>
    </location>
</feature>
<feature type="cross-link" description="Glycyl lysine isopeptide (Lys-Gly) (interchain with G-Cter in SUMO2)" evidence="29">
    <location>
        <position position="523"/>
    </location>
</feature>
<feature type="sequence variant" id="VAR_087609" description="Found in patients with steroid-resistant nephrotic syndrome; uncertain significance; dbSNP:rs141778404." evidence="16">
    <original>K</original>
    <variation>M</variation>
    <location>
        <position position="301"/>
    </location>
</feature>
<feature type="sequence variant" id="VAR_087610" description="In dbSNP:rs138727736." evidence="16">
    <original>T</original>
    <variation>A</variation>
    <location>
        <position position="374"/>
    </location>
</feature>
<feature type="sequence variant" id="VAR_033672" description="In dbSNP:rs34069459.">
    <original>N</original>
    <variation>K</variation>
    <location>
        <position position="581"/>
    </location>
</feature>
<feature type="strand" evidence="32">
    <location>
        <begin position="4"/>
        <end position="6"/>
    </location>
</feature>
<feature type="strand" evidence="32">
    <location>
        <begin position="25"/>
        <end position="30"/>
    </location>
</feature>
<feature type="strand" evidence="32">
    <location>
        <begin position="37"/>
        <end position="42"/>
    </location>
</feature>
<feature type="strand" evidence="32">
    <location>
        <begin position="45"/>
        <end position="50"/>
    </location>
</feature>
<feature type="strand" evidence="32">
    <location>
        <begin position="53"/>
        <end position="56"/>
    </location>
</feature>
<feature type="strand" evidence="31">
    <location>
        <begin position="112"/>
        <end position="115"/>
    </location>
</feature>
<feature type="strand" evidence="31">
    <location>
        <begin position="134"/>
        <end position="142"/>
    </location>
</feature>
<feature type="strand" evidence="31">
    <location>
        <begin position="145"/>
        <end position="150"/>
    </location>
</feature>
<feature type="strand" evidence="31">
    <location>
        <begin position="153"/>
        <end position="158"/>
    </location>
</feature>
<feature type="helix" evidence="31">
    <location>
        <begin position="159"/>
        <end position="161"/>
    </location>
</feature>
<feature type="strand" evidence="31">
    <location>
        <begin position="162"/>
        <end position="164"/>
    </location>
</feature>
<feature type="helix" evidence="30">
    <location>
        <begin position="489"/>
        <end position="492"/>
    </location>
</feature>
<feature type="helix" evidence="30">
    <location>
        <begin position="503"/>
        <end position="505"/>
    </location>
</feature>
<sequence length="639" mass="71451">MVDYIVEYDYDAVHDDELTIRVGEIIRNVKKLQEEGWLEGELNGRRGMFPDNFVKEIKRETEFKDDSLPIKRERHGNVASLVQRISTYGLPAGGIQPHPQTKNIKKKTKKRQCKVLFEYIPQNEDELELKVGDIIDINEEVEEGWWSGTLNNKLGLFPSNFVKELEVTDDGETHEAQDDSETVLAGPTSPIPSLGNVSETASGSVTQPKKIRGIGFGDIFKEGSVKLRTRTSSSETEEKKPEKPLILQSLGPKTQSVEITKTDTEGKIKAKEYCRTLFAYEGTNEDELTFKEGEIIHLISKETGEAGWWRGELNGKEGVFPDNFAVQINELDKDFPKPKKPPPPAKAPAPKPELIAAEKKYFSLKPEEKDEKSTLEQKPSKPAAPQVPPKKPTPPTKASNLLRSSGTVYPKRPEKPVPPPPPIAKINGEVSSISSKFETEPVSKLKLDSEQLPLRPKSVDFDSLTVRTSKETDVVNFDDIASSENLLHLTANRPKMPGRRLPGRFNGGHSPTHSPEKILKLPKEEDSANLKPSELKKDTCYSPKPSVYLSTPSSASKANTTAFLTPLEIKAKVETDDVKKNSLDELRAQIIELLCIVEALKKDHGKELEKLRKDLEEEKTMRSNLEMEIEKLKKAVLSS</sequence>
<reference key="1">
    <citation type="journal article" date="1999" name="Proc. Natl. Acad. Sci. U.S.A.">
        <title>CMS: an adapter molecule involved in cytoskeletal rearrangements.</title>
        <authorList>
            <person name="Kirsch K.H."/>
            <person name="Georgescu M.M."/>
            <person name="Ishimaru S."/>
            <person name="Hanafusa H."/>
        </authorList>
    </citation>
    <scope>NUCLEOTIDE SEQUENCE [MRNA]</scope>
    <scope>FUNCTION</scope>
    <scope>HOMODIMERIZATION</scope>
    <scope>INTERACTION WITH BCAR1</scope>
    <scope>SUBCELLULAR LOCATION</scope>
    <scope>DOMAIN</scope>
    <scope>PHOSPHORYLATION</scope>
</reference>
<reference key="2">
    <citation type="submission" date="1999-06" db="EMBL/GenBank/DDBJ databases">
        <title>Human homolog of CD2AP.</title>
        <authorList>
            <person name="Ora A."/>
            <person name="Toppinen M."/>
            <person name="Lehtonen E."/>
        </authorList>
    </citation>
    <scope>NUCLEOTIDE SEQUENCE [MRNA]</scope>
</reference>
<reference key="3">
    <citation type="journal article" date="2003" name="Nature">
        <title>The DNA sequence and analysis of human chromosome 6.</title>
        <authorList>
            <person name="Mungall A.J."/>
            <person name="Palmer S.A."/>
            <person name="Sims S.K."/>
            <person name="Edwards C.A."/>
            <person name="Ashurst J.L."/>
            <person name="Wilming L."/>
            <person name="Jones M.C."/>
            <person name="Horton R."/>
            <person name="Hunt S.E."/>
            <person name="Scott C.E."/>
            <person name="Gilbert J.G.R."/>
            <person name="Clamp M.E."/>
            <person name="Bethel G."/>
            <person name="Milne S."/>
            <person name="Ainscough R."/>
            <person name="Almeida J.P."/>
            <person name="Ambrose K.D."/>
            <person name="Andrews T.D."/>
            <person name="Ashwell R.I.S."/>
            <person name="Babbage A.K."/>
            <person name="Bagguley C.L."/>
            <person name="Bailey J."/>
            <person name="Banerjee R."/>
            <person name="Barker D.J."/>
            <person name="Barlow K.F."/>
            <person name="Bates K."/>
            <person name="Beare D.M."/>
            <person name="Beasley H."/>
            <person name="Beasley O."/>
            <person name="Bird C.P."/>
            <person name="Blakey S.E."/>
            <person name="Bray-Allen S."/>
            <person name="Brook J."/>
            <person name="Brown A.J."/>
            <person name="Brown J.Y."/>
            <person name="Burford D.C."/>
            <person name="Burrill W."/>
            <person name="Burton J."/>
            <person name="Carder C."/>
            <person name="Carter N.P."/>
            <person name="Chapman J.C."/>
            <person name="Clark S.Y."/>
            <person name="Clark G."/>
            <person name="Clee C.M."/>
            <person name="Clegg S."/>
            <person name="Cobley V."/>
            <person name="Collier R.E."/>
            <person name="Collins J.E."/>
            <person name="Colman L.K."/>
            <person name="Corby N.R."/>
            <person name="Coville G.J."/>
            <person name="Culley K.M."/>
            <person name="Dhami P."/>
            <person name="Davies J."/>
            <person name="Dunn M."/>
            <person name="Earthrowl M.E."/>
            <person name="Ellington A.E."/>
            <person name="Evans K.A."/>
            <person name="Faulkner L."/>
            <person name="Francis M.D."/>
            <person name="Frankish A."/>
            <person name="Frankland J."/>
            <person name="French L."/>
            <person name="Garner P."/>
            <person name="Garnett J."/>
            <person name="Ghori M.J."/>
            <person name="Gilby L.M."/>
            <person name="Gillson C.J."/>
            <person name="Glithero R.J."/>
            <person name="Grafham D.V."/>
            <person name="Grant M."/>
            <person name="Gribble S."/>
            <person name="Griffiths C."/>
            <person name="Griffiths M.N.D."/>
            <person name="Hall R."/>
            <person name="Halls K.S."/>
            <person name="Hammond S."/>
            <person name="Harley J.L."/>
            <person name="Hart E.A."/>
            <person name="Heath P.D."/>
            <person name="Heathcott R."/>
            <person name="Holmes S.J."/>
            <person name="Howden P.J."/>
            <person name="Howe K.L."/>
            <person name="Howell G.R."/>
            <person name="Huckle E."/>
            <person name="Humphray S.J."/>
            <person name="Humphries M.D."/>
            <person name="Hunt A.R."/>
            <person name="Johnson C.M."/>
            <person name="Joy A.A."/>
            <person name="Kay M."/>
            <person name="Keenan S.J."/>
            <person name="Kimberley A.M."/>
            <person name="King A."/>
            <person name="Laird G.K."/>
            <person name="Langford C."/>
            <person name="Lawlor S."/>
            <person name="Leongamornlert D.A."/>
            <person name="Leversha M."/>
            <person name="Lloyd C.R."/>
            <person name="Lloyd D.M."/>
            <person name="Loveland J.E."/>
            <person name="Lovell J."/>
            <person name="Martin S."/>
            <person name="Mashreghi-Mohammadi M."/>
            <person name="Maslen G.L."/>
            <person name="Matthews L."/>
            <person name="McCann O.T."/>
            <person name="McLaren S.J."/>
            <person name="McLay K."/>
            <person name="McMurray A."/>
            <person name="Moore M.J.F."/>
            <person name="Mullikin J.C."/>
            <person name="Niblett D."/>
            <person name="Nickerson T."/>
            <person name="Novik K.L."/>
            <person name="Oliver K."/>
            <person name="Overton-Larty E.K."/>
            <person name="Parker A."/>
            <person name="Patel R."/>
            <person name="Pearce A.V."/>
            <person name="Peck A.I."/>
            <person name="Phillimore B.J.C.T."/>
            <person name="Phillips S."/>
            <person name="Plumb R.W."/>
            <person name="Porter K.M."/>
            <person name="Ramsey Y."/>
            <person name="Ranby S.A."/>
            <person name="Rice C.M."/>
            <person name="Ross M.T."/>
            <person name="Searle S.M."/>
            <person name="Sehra H.K."/>
            <person name="Sheridan E."/>
            <person name="Skuce C.D."/>
            <person name="Smith S."/>
            <person name="Smith M."/>
            <person name="Spraggon L."/>
            <person name="Squares S.L."/>
            <person name="Steward C.A."/>
            <person name="Sycamore N."/>
            <person name="Tamlyn-Hall G."/>
            <person name="Tester J."/>
            <person name="Theaker A.J."/>
            <person name="Thomas D.W."/>
            <person name="Thorpe A."/>
            <person name="Tracey A."/>
            <person name="Tromans A."/>
            <person name="Tubby B."/>
            <person name="Wall M."/>
            <person name="Wallis J.M."/>
            <person name="West A.P."/>
            <person name="White S.S."/>
            <person name="Whitehead S.L."/>
            <person name="Whittaker H."/>
            <person name="Wild A."/>
            <person name="Willey D.J."/>
            <person name="Wilmer T.E."/>
            <person name="Wood J.M."/>
            <person name="Wray P.W."/>
            <person name="Wyatt J.C."/>
            <person name="Young L."/>
            <person name="Younger R.M."/>
            <person name="Bentley D.R."/>
            <person name="Coulson A."/>
            <person name="Durbin R.M."/>
            <person name="Hubbard T."/>
            <person name="Sulston J.E."/>
            <person name="Dunham I."/>
            <person name="Rogers J."/>
            <person name="Beck S."/>
        </authorList>
    </citation>
    <scope>NUCLEOTIDE SEQUENCE [LARGE SCALE GENOMIC DNA]</scope>
</reference>
<reference key="4">
    <citation type="submission" date="2005-07" db="EMBL/GenBank/DDBJ databases">
        <authorList>
            <person name="Mural R.J."/>
            <person name="Istrail S."/>
            <person name="Sutton G.G."/>
            <person name="Florea L."/>
            <person name="Halpern A.L."/>
            <person name="Mobarry C.M."/>
            <person name="Lippert R."/>
            <person name="Walenz B."/>
            <person name="Shatkay H."/>
            <person name="Dew I."/>
            <person name="Miller J.R."/>
            <person name="Flanigan M.J."/>
            <person name="Edwards N.J."/>
            <person name="Bolanos R."/>
            <person name="Fasulo D."/>
            <person name="Halldorsson B.V."/>
            <person name="Hannenhalli S."/>
            <person name="Turner R."/>
            <person name="Yooseph S."/>
            <person name="Lu F."/>
            <person name="Nusskern D.R."/>
            <person name="Shue B.C."/>
            <person name="Zheng X.H."/>
            <person name="Zhong F."/>
            <person name="Delcher A.L."/>
            <person name="Huson D.H."/>
            <person name="Kravitz S.A."/>
            <person name="Mouchard L."/>
            <person name="Reinert K."/>
            <person name="Remington K.A."/>
            <person name="Clark A.G."/>
            <person name="Waterman M.S."/>
            <person name="Eichler E.E."/>
            <person name="Adams M.D."/>
            <person name="Hunkapiller M.W."/>
            <person name="Myers E.W."/>
            <person name="Venter J.C."/>
        </authorList>
    </citation>
    <scope>NUCLEOTIDE SEQUENCE [LARGE SCALE GENOMIC DNA]</scope>
</reference>
<reference key="5">
    <citation type="journal article" date="2004" name="Genome Res.">
        <title>The status, quality, and expansion of the NIH full-length cDNA project: the Mammalian Gene Collection (MGC).</title>
        <authorList>
            <consortium name="The MGC Project Team"/>
        </authorList>
    </citation>
    <scope>NUCLEOTIDE SEQUENCE [LARGE SCALE MRNA]</scope>
</reference>
<reference key="6">
    <citation type="journal article" date="2007" name="BMC Genomics">
        <title>The full-ORF clone resource of the German cDNA consortium.</title>
        <authorList>
            <person name="Bechtel S."/>
            <person name="Rosenfelder H."/>
            <person name="Duda A."/>
            <person name="Schmidt C.P."/>
            <person name="Ernst U."/>
            <person name="Wellenreuther R."/>
            <person name="Mehrle A."/>
            <person name="Schuster C."/>
            <person name="Bahr A."/>
            <person name="Bloecker H."/>
            <person name="Heubner D."/>
            <person name="Hoerlein A."/>
            <person name="Michel G."/>
            <person name="Wedler H."/>
            <person name="Koehrer K."/>
            <person name="Ottenwaelder B."/>
            <person name="Poustka A."/>
            <person name="Wiemann S."/>
            <person name="Schupp I."/>
        </authorList>
    </citation>
    <scope>NUCLEOTIDE SEQUENCE [LARGE SCALE MRNA] OF 548-639</scope>
    <source>
        <tissue>Uterus</tissue>
    </source>
</reference>
<reference key="7">
    <citation type="journal article" date="2001" name="J. Biol. Chem.">
        <title>The adapter type protein CMS/CD2AP binds to the proto-oncogenic protein c-Cbl through a tyrosine phosphorylation-regulated Src homology 3 domain interaction.</title>
        <authorList>
            <person name="Kirsch K.H."/>
            <person name="Georgescu M.M."/>
            <person name="Shishido T."/>
            <person name="Langdon W.Y."/>
            <person name="Birge R.B."/>
            <person name="Hanafusa H."/>
        </authorList>
    </citation>
    <scope>PHOSPHORYLATION</scope>
    <scope>INTERACTION WITH CBL</scope>
    <scope>HOMODIMERIZATION</scope>
</reference>
<reference key="8">
    <citation type="journal article" date="2003" name="Science">
        <title>CD2-associated protein haploinsufficiency is linked to glomerular disease susceptibility.</title>
        <authorList>
            <person name="Kim J.M."/>
            <person name="Wu H."/>
            <person name="Green G."/>
            <person name="Winkler C.A."/>
            <person name="Kopp J.B."/>
            <person name="Miner J.H."/>
            <person name="Unanue E.R."/>
            <person name="Shaw A.S."/>
        </authorList>
    </citation>
    <scope>INVOLVEMENT IN SUSCEPTIBILITY TO FSGS3</scope>
</reference>
<reference key="9">
    <citation type="journal article" date="2005" name="Mol. Biol. Cell">
        <title>Clues to CD2-associated protein involvement in cytokinesis.</title>
        <authorList>
            <person name="Monzo P."/>
            <person name="Gauthier N.C."/>
            <person name="Keslair F."/>
            <person name="Loubat A."/>
            <person name="Field C.M."/>
            <person name="Le Marchand-Brustel Y."/>
            <person name="Cormont M."/>
        </authorList>
    </citation>
    <scope>FUNCTION</scope>
    <scope>INTERACTION WITH ANLN</scope>
    <scope>SUBCELLULAR LOCATION</scope>
    <scope>PHOSPHORYLATION</scope>
</reference>
<reference key="10">
    <citation type="journal article" date="2006" name="Cell">
        <title>A Rich1/Amot complex regulates the Cdc42 GTPase and apical-polarity proteins in epithelial cells.</title>
        <authorList>
            <person name="Wells C.D."/>
            <person name="Fawcett J.P."/>
            <person name="Traweger A."/>
            <person name="Yamanaka Y."/>
            <person name="Goudreault M."/>
            <person name="Elder K."/>
            <person name="Kulkarni S."/>
            <person name="Gish G."/>
            <person name="Virag C."/>
            <person name="Lim C."/>
            <person name="Colwill K."/>
            <person name="Starostine A."/>
            <person name="Metalnikov P."/>
            <person name="Pawson T."/>
        </authorList>
    </citation>
    <scope>INTERACTION WITH ARHGAP17</scope>
</reference>
<reference key="11">
    <citation type="journal article" date="2006" name="J. Biol. Chem.">
        <title>CFBP is a novel tyrosine-phosphorylated protein that might function as a regulator of CIN85/CD2AP.</title>
        <authorList>
            <person name="Konishi H."/>
            <person name="Tashiro K."/>
            <person name="Murata Y."/>
            <person name="Nabeshi H."/>
            <person name="Yamauchi E."/>
            <person name="Taniguchi H."/>
        </authorList>
    </citation>
    <scope>INTERACTION WITH MVB12A</scope>
</reference>
<reference key="12">
    <citation type="journal article" date="2007" name="EMBO J.">
        <title>Human ESCRT and ALIX proteins interact with proteins of the midbody and function in cytokinesis.</title>
        <authorList>
            <person name="Morita E."/>
            <person name="Sandrin V."/>
            <person name="Chung H.Y."/>
            <person name="Morham S.G."/>
            <person name="Gygi S.P."/>
            <person name="Rodesch C.K."/>
            <person name="Sundquist W.I."/>
        </authorList>
    </citation>
    <scope>INTERACTION WITH PDCD6IP AND TSG101</scope>
</reference>
<reference key="13">
    <citation type="journal article" date="2008" name="J. Neurosci.">
        <title>CD2AP and Cbl-3/Cbl-c constitute a critical checkpoint in the regulation of ret signal transduction.</title>
        <authorList>
            <person name="Tsui C.C."/>
            <person name="Pierchala B.A."/>
        </authorList>
    </citation>
    <scope>INTERACTION WITH RET</scope>
</reference>
<reference key="14">
    <citation type="journal article" date="2008" name="J. Proteome Res.">
        <title>Combining protein-based IMAC, peptide-based IMAC, and MudPIT for efficient phosphoproteomic analysis.</title>
        <authorList>
            <person name="Cantin G.T."/>
            <person name="Yi W."/>
            <person name="Lu B."/>
            <person name="Park S.K."/>
            <person name="Xu T."/>
            <person name="Lee J.-D."/>
            <person name="Yates J.R. III"/>
        </authorList>
    </citation>
    <scope>PHOSPHORYLATION [LARGE SCALE ANALYSIS] AT SER-458</scope>
    <scope>IDENTIFICATION BY MASS SPECTROMETRY [LARGE SCALE ANALYSIS]</scope>
    <source>
        <tissue>Cervix carcinoma</tissue>
    </source>
</reference>
<reference key="15">
    <citation type="journal article" date="2008" name="J. Proteome Res.">
        <title>Phosphoproteome of resting human platelets.</title>
        <authorList>
            <person name="Zahedi R.P."/>
            <person name="Lewandrowski U."/>
            <person name="Wiesner J."/>
            <person name="Wortelkamp S."/>
            <person name="Moebius J."/>
            <person name="Schuetz C."/>
            <person name="Walter U."/>
            <person name="Gambaryan S."/>
            <person name="Sickmann A."/>
        </authorList>
    </citation>
    <scope>PHOSPHORYLATION [LARGE SCALE ANALYSIS] AT SER-458</scope>
    <scope>IDENTIFICATION BY MASS SPECTROMETRY [LARGE SCALE ANALYSIS]</scope>
    <source>
        <tissue>Platelet</tissue>
    </source>
</reference>
<reference key="16">
    <citation type="journal article" date="2008" name="Proc. Natl. Acad. Sci. U.S.A.">
        <title>A quantitative atlas of mitotic phosphorylation.</title>
        <authorList>
            <person name="Dephoure N."/>
            <person name="Zhou C."/>
            <person name="Villen J."/>
            <person name="Beausoleil S.A."/>
            <person name="Bakalarski C.E."/>
            <person name="Elledge S.J."/>
            <person name="Gygi S.P."/>
        </authorList>
    </citation>
    <scope>PHOSPHORYLATION [LARGE SCALE ANALYSIS] AT SER-458</scope>
    <scope>IDENTIFICATION BY MASS SPECTROMETRY [LARGE SCALE ANALYSIS]</scope>
    <source>
        <tissue>Cervix carcinoma</tissue>
    </source>
</reference>
<reference key="17">
    <citation type="journal article" date="2009" name="Sci. Signal.">
        <title>Quantitative phosphoproteomic analysis of T cell receptor signaling reveals system-wide modulation of protein-protein interactions.</title>
        <authorList>
            <person name="Mayya V."/>
            <person name="Lundgren D.H."/>
            <person name="Hwang S.-I."/>
            <person name="Rezaul K."/>
            <person name="Wu L."/>
            <person name="Eng J.K."/>
            <person name="Rodionov V."/>
            <person name="Han D.K."/>
        </authorList>
    </citation>
    <scope>PHOSPHORYLATION [LARGE SCALE ANALYSIS] AT SER-458</scope>
    <scope>IDENTIFICATION BY MASS SPECTROMETRY [LARGE SCALE ANALYSIS]</scope>
    <source>
        <tissue>Leukemic T-cell</tissue>
    </source>
</reference>
<reference key="18">
    <citation type="journal article" date="2010" name="Sci. Signal.">
        <title>Quantitative phosphoproteomics reveals widespread full phosphorylation site occupancy during mitosis.</title>
        <authorList>
            <person name="Olsen J.V."/>
            <person name="Vermeulen M."/>
            <person name="Santamaria A."/>
            <person name="Kumar C."/>
            <person name="Miller M.L."/>
            <person name="Jensen L.J."/>
            <person name="Gnad F."/>
            <person name="Cox J."/>
            <person name="Jensen T.S."/>
            <person name="Nigg E.A."/>
            <person name="Brunak S."/>
            <person name="Mann M."/>
        </authorList>
    </citation>
    <scope>PHOSPHORYLATION [LARGE SCALE ANALYSIS] AT SER-458 AND SER-510</scope>
    <scope>IDENTIFICATION BY MASS SPECTROMETRY [LARGE SCALE ANALYSIS]</scope>
    <source>
        <tissue>Cervix carcinoma</tissue>
    </source>
</reference>
<reference key="19">
    <citation type="journal article" date="2011" name="BMC Syst. Biol.">
        <title>Initial characterization of the human central proteome.</title>
        <authorList>
            <person name="Burkard T.R."/>
            <person name="Planyavsky M."/>
            <person name="Kaupe I."/>
            <person name="Breitwieser F.P."/>
            <person name="Buerckstuemmer T."/>
            <person name="Bennett K.L."/>
            <person name="Superti-Furga G."/>
            <person name="Colinge J."/>
        </authorList>
    </citation>
    <scope>IDENTIFICATION BY MASS SPECTROMETRY [LARGE SCALE ANALYSIS]</scope>
</reference>
<reference key="20">
    <citation type="journal article" date="2011" name="Sci. Signal.">
        <title>System-wide temporal characterization of the proteome and phosphoproteome of human embryonic stem cell differentiation.</title>
        <authorList>
            <person name="Rigbolt K.T."/>
            <person name="Prokhorova T.A."/>
            <person name="Akimov V."/>
            <person name="Henningsen J."/>
            <person name="Johansen P.T."/>
            <person name="Kratchmarova I."/>
            <person name="Kassem M."/>
            <person name="Mann M."/>
            <person name="Olsen J.V."/>
            <person name="Blagoev B."/>
        </authorList>
    </citation>
    <scope>PHOSPHORYLATION [LARGE SCALE ANALYSIS] AT SER-224; SER-458; SER-510 AND SER-514</scope>
    <scope>IDENTIFICATION BY MASS SPECTROMETRY [LARGE SCALE ANALYSIS]</scope>
</reference>
<reference key="21">
    <citation type="journal article" date="2012" name="J. Cell Biol.">
        <title>Epithelial junction formation requires confinement of Cdc42 activity by a novel SH3BP1 complex.</title>
        <authorList>
            <person name="Elbediwy A."/>
            <person name="Zihni C."/>
            <person name="Terry S.J."/>
            <person name="Clark P."/>
            <person name="Matter K."/>
            <person name="Balda M.S."/>
        </authorList>
    </citation>
    <scope>FUNCTION</scope>
    <scope>INTERACTION WITH CAPZA1; CGNL1 AND SH3BP1</scope>
    <scope>SUBCELLULAR LOCATION</scope>
</reference>
<reference key="22">
    <citation type="journal article" date="2012" name="Proc. Natl. Acad. Sci. U.S.A.">
        <title>N-terminal acetylome analyses and functional insights of the N-terminal acetyltransferase NatB.</title>
        <authorList>
            <person name="Van Damme P."/>
            <person name="Lasa M."/>
            <person name="Polevoda B."/>
            <person name="Gazquez C."/>
            <person name="Elosegui-Artola A."/>
            <person name="Kim D.S."/>
            <person name="De Juan-Pardo E."/>
            <person name="Demeyer K."/>
            <person name="Hole K."/>
            <person name="Larrea E."/>
            <person name="Timmerman E."/>
            <person name="Prieto J."/>
            <person name="Arnesen T."/>
            <person name="Sherman F."/>
            <person name="Gevaert K."/>
            <person name="Aldabe R."/>
        </authorList>
    </citation>
    <scope>IDENTIFICATION BY MASS SPECTROMETRY [LARGE SCALE ANALYSIS]</scope>
</reference>
<reference key="23">
    <citation type="journal article" date="2013" name="J. Proteome Res.">
        <title>Toward a comprehensive characterization of a human cancer cell phosphoproteome.</title>
        <authorList>
            <person name="Zhou H."/>
            <person name="Di Palma S."/>
            <person name="Preisinger C."/>
            <person name="Peng M."/>
            <person name="Polat A.N."/>
            <person name="Heck A.J."/>
            <person name="Mohammed S."/>
        </authorList>
    </citation>
    <scope>PHOSPHORYLATION [LARGE SCALE ANALYSIS] AT SER-67; SER-80; SER-86; SER-224; SER-458; SER-463; SER-510; SER-514; THR-565 AND SER-582</scope>
    <scope>IDENTIFICATION BY MASS SPECTROMETRY [LARGE SCALE ANALYSIS]</scope>
    <source>
        <tissue>Cervix carcinoma</tissue>
        <tissue>Erythroleukemia</tissue>
    </source>
</reference>
<reference key="24">
    <citation type="journal article" date="2014" name="J. Proteomics">
        <title>An enzyme assisted RP-RPLC approach for in-depth analysis of human liver phosphoproteome.</title>
        <authorList>
            <person name="Bian Y."/>
            <person name="Song C."/>
            <person name="Cheng K."/>
            <person name="Dong M."/>
            <person name="Wang F."/>
            <person name="Huang J."/>
            <person name="Sun D."/>
            <person name="Wang L."/>
            <person name="Ye M."/>
            <person name="Zou H."/>
        </authorList>
    </citation>
    <scope>PHOSPHORYLATION [LARGE SCALE ANALYSIS] AT SER-458 AND SER-463</scope>
    <scope>IDENTIFICATION BY MASS SPECTROMETRY [LARGE SCALE ANALYSIS]</scope>
    <source>
        <tissue>Liver</tissue>
    </source>
</reference>
<reference key="25">
    <citation type="journal article" date="2014" name="Nat. Struct. Mol. Biol.">
        <title>Uncovering global SUMOylation signaling networks in a site-specific manner.</title>
        <authorList>
            <person name="Hendriks I.A."/>
            <person name="D'Souza R.C."/>
            <person name="Yang B."/>
            <person name="Verlaan-de Vries M."/>
            <person name="Mann M."/>
            <person name="Vertegaal A.C."/>
        </authorList>
    </citation>
    <scope>SUMOYLATION [LARGE SCALE ANALYSIS] AT LYS-58</scope>
    <scope>IDENTIFICATION BY MASS SPECTROMETRY [LARGE SCALE ANALYSIS]</scope>
</reference>
<reference key="26">
    <citation type="journal article" date="2017" name="Nat. Struct. Mol. Biol.">
        <title>Site-specific mapping of the human SUMO proteome reveals co-modification with phosphorylation.</title>
        <authorList>
            <person name="Hendriks I.A."/>
            <person name="Lyon D."/>
            <person name="Young C."/>
            <person name="Jensen L.J."/>
            <person name="Vertegaal A.C."/>
            <person name="Nielsen M.L."/>
        </authorList>
    </citation>
    <scope>SUMOYLATION [LARGE SCALE ANALYSIS] AT LYS-523</scope>
    <scope>IDENTIFICATION BY MASS SPECTROMETRY [LARGE SCALE ANALYSIS]</scope>
</reference>
<reference key="27">
    <citation type="journal article" date="2019" name="Virology">
        <title>Structural characterization and biological function of bivalent binding of CD2AP to intrinsically disordered domain of chikungunya virus nsP3 protein.</title>
        <authorList>
            <person name="Agback P."/>
            <person name="Dominguez F."/>
            <person name="Pustovalova Y."/>
            <person name="Lukash T."/>
            <person name="Shiliaev N."/>
            <person name="Orekhov V.Y."/>
            <person name="Frolov I."/>
            <person name="Agback T."/>
            <person name="Frolova E.I."/>
        </authorList>
    </citation>
    <scope>INTERACTION WITH CHIKUNGUNYA VIRUS NON-STRUCTURAL PROTEIN 3 (MICROBIAL INFECTION)</scope>
</reference>
<reference key="28">
    <citation type="journal article" date="2006" name="J. Biol. Chem.">
        <title>Atypical polyproline recognition by the CMS N-terminal Src homology 3 domain.</title>
        <authorList>
            <person name="Moncalian G."/>
            <person name="Cardenes N."/>
            <person name="Deribe Y.L."/>
            <person name="Spinola-Amilibia M."/>
            <person name="Dikic I."/>
            <person name="Bravo J."/>
        </authorList>
    </citation>
    <scope>X-RAY CRYSTALLOGRAPHY (1.7 ANGSTROMS) OF 1-62 IN COMPLEXES WITH CD2 AND CBLB</scope>
    <scope>SUBUNIT</scope>
</reference>
<reference key="29">
    <citation type="journal article" date="2007" name="Biochim. Biophys. Acta">
        <title>Solution structure of the second SH3 domain of human CMS and a newly identified binding site at the C-terminus of c-Cbl.</title>
        <authorList>
            <person name="Yao B."/>
            <person name="Zhang J."/>
            <person name="Dai H."/>
            <person name="Sun J."/>
            <person name="Jiao Y."/>
            <person name="Tang Y."/>
            <person name="Wu J."/>
            <person name="Shi Y."/>
        </authorList>
    </citation>
    <scope>STRUCTURE BY NMR OF 111-166</scope>
    <scope>IDENTIFICATION BY MASS SPECTROMETRY</scope>
</reference>
<reference key="30">
    <citation type="submission" date="2011-12" db="PDB data bank">
        <title>Atomic resolution crystal structure of the 2nd SH3 domain from human CD2AP (CMS) in complex with a proline-rich peptide from human RIN3.</title>
        <authorList>
            <consortium name="Structural genomics consortium (SGC)"/>
        </authorList>
    </citation>
    <scope>X-RAY CRYSTALLOGRAPHY (1.11 ANGSTROMS) OF 109-168 IN COMPLEX WITH RIN3</scope>
</reference>
<reference key="31">
    <citation type="journal article" date="2013" name="J. Hum. Genet.">
        <title>A molecular genetic analysis of childhood nephrotic syndrome in a cohort of Saudi Arabian families.</title>
        <authorList>
            <person name="Al-Hamed M.H."/>
            <person name="Al-Sabban E."/>
            <person name="Al-Mojalli H."/>
            <person name="Al-Harbi N."/>
            <person name="Faqeih E."/>
            <person name="Al Shaya H."/>
            <person name="Alhasan K."/>
            <person name="Al-Hissi S."/>
            <person name="Rajab M."/>
            <person name="Edwards N."/>
            <person name="Al-Abbad A."/>
            <person name="Al-Hassoun I."/>
            <person name="Sayer J.A."/>
            <person name="Meyer B.F."/>
        </authorList>
    </citation>
    <scope>VARIANTS MET-301 AND ALA-374</scope>
</reference>
<dbReference type="EMBL" id="AF146277">
    <property type="protein sequence ID" value="AAD34595.1"/>
    <property type="molecule type" value="mRNA"/>
</dbReference>
<dbReference type="EMBL" id="AF164377">
    <property type="protein sequence ID" value="AAF80495.1"/>
    <property type="molecule type" value="mRNA"/>
</dbReference>
<dbReference type="EMBL" id="AL355353">
    <property type="status" value="NOT_ANNOTATED_CDS"/>
    <property type="molecule type" value="Genomic_DNA"/>
</dbReference>
<dbReference type="EMBL" id="AL358178">
    <property type="status" value="NOT_ANNOTATED_CDS"/>
    <property type="molecule type" value="Genomic_DNA"/>
</dbReference>
<dbReference type="EMBL" id="CH471081">
    <property type="protein sequence ID" value="EAX04319.1"/>
    <property type="molecule type" value="Genomic_DNA"/>
</dbReference>
<dbReference type="EMBL" id="BC069444">
    <property type="protein sequence ID" value="AAH69444.1"/>
    <property type="molecule type" value="mRNA"/>
</dbReference>
<dbReference type="EMBL" id="AL050105">
    <property type="protein sequence ID" value="CAB43274.1"/>
    <property type="molecule type" value="mRNA"/>
</dbReference>
<dbReference type="CCDS" id="CCDS34472.1"/>
<dbReference type="PIR" id="T13151">
    <property type="entry name" value="T13151"/>
</dbReference>
<dbReference type="RefSeq" id="NP_036252.1">
    <property type="nucleotide sequence ID" value="NM_012120.3"/>
</dbReference>
<dbReference type="PDB" id="2FEI">
    <property type="method" value="NMR"/>
    <property type="chains" value="A=111-166"/>
</dbReference>
<dbReference type="PDB" id="2J6F">
    <property type="method" value="X-ray"/>
    <property type="resolution" value="1.70 A"/>
    <property type="chains" value="A=1-62"/>
</dbReference>
<dbReference type="PDB" id="2J6K">
    <property type="method" value="X-ray"/>
    <property type="resolution" value="2.78 A"/>
    <property type="chains" value="A/B/C/D/E/F/G/H/I/J/K/L=1-62"/>
</dbReference>
<dbReference type="PDB" id="2J6O">
    <property type="method" value="X-ray"/>
    <property type="resolution" value="2.22 A"/>
    <property type="chains" value="A=1-62"/>
</dbReference>
<dbReference type="PDB" id="2J7I">
    <property type="method" value="X-ray"/>
    <property type="resolution" value="2.90 A"/>
    <property type="chains" value="A/B=1-62"/>
</dbReference>
<dbReference type="PDB" id="3AA6">
    <property type="method" value="X-ray"/>
    <property type="resolution" value="1.90 A"/>
    <property type="chains" value="C=485-507"/>
</dbReference>
<dbReference type="PDB" id="3LK4">
    <property type="method" value="X-ray"/>
    <property type="resolution" value="1.99 A"/>
    <property type="chains" value="0/3/6/9/C/F/I/L/O/R/U/X=475-503"/>
</dbReference>
<dbReference type="PDB" id="3U23">
    <property type="method" value="X-ray"/>
    <property type="resolution" value="1.11 A"/>
    <property type="chains" value="A=109-168"/>
</dbReference>
<dbReference type="PDB" id="4WCI">
    <property type="method" value="X-ray"/>
    <property type="resolution" value="1.65 A"/>
    <property type="chains" value="A/C/E=1-60"/>
</dbReference>
<dbReference type="PDB" id="4X1V">
    <property type="method" value="X-ray"/>
    <property type="resolution" value="1.58 A"/>
    <property type="chains" value="A=109-168"/>
</dbReference>
<dbReference type="PDB" id="7DS6">
    <property type="method" value="X-ray"/>
    <property type="resolution" value="1.69 A"/>
    <property type="chains" value="C=496-507"/>
</dbReference>
<dbReference type="PDB" id="7DS8">
    <property type="method" value="X-ray"/>
    <property type="resolution" value="1.95 A"/>
    <property type="chains" value="C=485-495"/>
</dbReference>
<dbReference type="PDBsum" id="2FEI"/>
<dbReference type="PDBsum" id="2J6F"/>
<dbReference type="PDBsum" id="2J6K"/>
<dbReference type="PDBsum" id="2J6O"/>
<dbReference type="PDBsum" id="2J7I"/>
<dbReference type="PDBsum" id="3AA6"/>
<dbReference type="PDBsum" id="3LK4"/>
<dbReference type="PDBsum" id="3U23"/>
<dbReference type="PDBsum" id="4WCI"/>
<dbReference type="PDBsum" id="4X1V"/>
<dbReference type="PDBsum" id="7DS6"/>
<dbReference type="PDBsum" id="7DS8"/>
<dbReference type="SMR" id="Q9Y5K6"/>
<dbReference type="BioGRID" id="117140">
    <property type="interactions" value="219"/>
</dbReference>
<dbReference type="CORUM" id="Q9Y5K6"/>
<dbReference type="DIP" id="DIP-31807N"/>
<dbReference type="FunCoup" id="Q9Y5K6">
    <property type="interactions" value="1312"/>
</dbReference>
<dbReference type="IntAct" id="Q9Y5K6">
    <property type="interactions" value="111"/>
</dbReference>
<dbReference type="MINT" id="Q9Y5K6"/>
<dbReference type="STRING" id="9606.ENSP00000352264"/>
<dbReference type="ChEMBL" id="CHEMBL5465369"/>
<dbReference type="TCDB" id="8.A.34.1.5">
    <property type="family name" value="the endophilin (endophilin) family"/>
</dbReference>
<dbReference type="GlyGen" id="Q9Y5K6">
    <property type="glycosylation" value="7 sites, 1 O-linked glycan (5 sites)"/>
</dbReference>
<dbReference type="iPTMnet" id="Q9Y5K6"/>
<dbReference type="MetOSite" id="Q9Y5K6"/>
<dbReference type="PhosphoSitePlus" id="Q9Y5K6"/>
<dbReference type="BioMuta" id="CD2AP"/>
<dbReference type="DMDM" id="30172980"/>
<dbReference type="jPOST" id="Q9Y5K6"/>
<dbReference type="MassIVE" id="Q9Y5K6"/>
<dbReference type="PaxDb" id="9606-ENSP00000352264"/>
<dbReference type="PeptideAtlas" id="Q9Y5K6"/>
<dbReference type="ProteomicsDB" id="86434"/>
<dbReference type="Pumba" id="Q9Y5K6"/>
<dbReference type="ABCD" id="Q9Y5K6">
    <property type="antibodies" value="9 sequenced antibodies"/>
</dbReference>
<dbReference type="Antibodypedia" id="1016">
    <property type="antibodies" value="175 antibodies from 33 providers"/>
</dbReference>
<dbReference type="DNASU" id="23607"/>
<dbReference type="Ensembl" id="ENST00000359314.5">
    <property type="protein sequence ID" value="ENSP00000352264.5"/>
    <property type="gene ID" value="ENSG00000198087.7"/>
</dbReference>
<dbReference type="GeneID" id="23607"/>
<dbReference type="KEGG" id="hsa:23607"/>
<dbReference type="MANE-Select" id="ENST00000359314.5">
    <property type="protein sequence ID" value="ENSP00000352264.5"/>
    <property type="RefSeq nucleotide sequence ID" value="NM_012120.3"/>
    <property type="RefSeq protein sequence ID" value="NP_036252.1"/>
</dbReference>
<dbReference type="UCSC" id="uc003oyw.4">
    <property type="organism name" value="human"/>
</dbReference>
<dbReference type="AGR" id="HGNC:14258"/>
<dbReference type="CTD" id="23607"/>
<dbReference type="DisGeNET" id="23607"/>
<dbReference type="GeneCards" id="CD2AP"/>
<dbReference type="HGNC" id="HGNC:14258">
    <property type="gene designation" value="CD2AP"/>
</dbReference>
<dbReference type="HPA" id="ENSG00000198087">
    <property type="expression patterns" value="Low tissue specificity"/>
</dbReference>
<dbReference type="MalaCards" id="CD2AP"/>
<dbReference type="MIM" id="604241">
    <property type="type" value="gene"/>
</dbReference>
<dbReference type="MIM" id="607832">
    <property type="type" value="phenotype"/>
</dbReference>
<dbReference type="neXtProt" id="NX_Q9Y5K6"/>
<dbReference type="NIAGADS" id="ENSG00000198087"/>
<dbReference type="OpenTargets" id="ENSG00000198087"/>
<dbReference type="Orphanet" id="656">
    <property type="disease" value="Hereditary steroid-resistant nephrotic syndrome"/>
</dbReference>
<dbReference type="PharmGKB" id="PA26208"/>
<dbReference type="VEuPathDB" id="HostDB:ENSG00000198087"/>
<dbReference type="eggNOG" id="KOG4348">
    <property type="taxonomic scope" value="Eukaryota"/>
</dbReference>
<dbReference type="GeneTree" id="ENSGT00940000157566"/>
<dbReference type="HOGENOM" id="CLU_024255_2_0_1"/>
<dbReference type="InParanoid" id="Q9Y5K6"/>
<dbReference type="OMA" id="SKXKPKK"/>
<dbReference type="OrthoDB" id="5340910at2759"/>
<dbReference type="PAN-GO" id="Q9Y5K6">
    <property type="GO annotations" value="6 GO annotations based on evolutionary models"/>
</dbReference>
<dbReference type="PhylomeDB" id="Q9Y5K6"/>
<dbReference type="TreeFam" id="TF350191"/>
<dbReference type="PathwayCommons" id="Q9Y5K6"/>
<dbReference type="Reactome" id="R-HSA-373753">
    <property type="pathway name" value="Nephrin family interactions"/>
</dbReference>
<dbReference type="SignaLink" id="Q9Y5K6"/>
<dbReference type="SIGNOR" id="Q9Y5K6"/>
<dbReference type="BioGRID-ORCS" id="23607">
    <property type="hits" value="17 hits in 1163 CRISPR screens"/>
</dbReference>
<dbReference type="CD-CODE" id="936CAA69">
    <property type="entry name" value="Slit diaphragm condensate"/>
</dbReference>
<dbReference type="ChiTaRS" id="CD2AP">
    <property type="organism name" value="human"/>
</dbReference>
<dbReference type="EvolutionaryTrace" id="Q9Y5K6"/>
<dbReference type="GeneWiki" id="CD2AP"/>
<dbReference type="GenomeRNAi" id="23607"/>
<dbReference type="Pharos" id="Q9Y5K6">
    <property type="development level" value="Tbio"/>
</dbReference>
<dbReference type="PRO" id="PR:Q9Y5K6"/>
<dbReference type="Proteomes" id="UP000005640">
    <property type="component" value="Chromosome 6"/>
</dbReference>
<dbReference type="RNAct" id="Q9Y5K6">
    <property type="molecule type" value="protein"/>
</dbReference>
<dbReference type="Bgee" id="ENSG00000198087">
    <property type="expression patterns" value="Expressed in jejunal mucosa and 196 other cell types or tissues"/>
</dbReference>
<dbReference type="GO" id="GO:0015629">
    <property type="term" value="C:actin cytoskeleton"/>
    <property type="evidence" value="ECO:0000304"/>
    <property type="project" value="ProtInc"/>
</dbReference>
<dbReference type="GO" id="GO:0030424">
    <property type="term" value="C:axon"/>
    <property type="evidence" value="ECO:0000250"/>
    <property type="project" value="ARUK-UCL"/>
</dbReference>
<dbReference type="GO" id="GO:0031252">
    <property type="term" value="C:cell leading edge"/>
    <property type="evidence" value="ECO:0000318"/>
    <property type="project" value="GO_Central"/>
</dbReference>
<dbReference type="GO" id="GO:0034451">
    <property type="term" value="C:centriolar satellite"/>
    <property type="evidence" value="ECO:0000314"/>
    <property type="project" value="HPA"/>
</dbReference>
<dbReference type="GO" id="GO:0005737">
    <property type="term" value="C:cytoplasm"/>
    <property type="evidence" value="ECO:0000318"/>
    <property type="project" value="GO_Central"/>
</dbReference>
<dbReference type="GO" id="GO:0030425">
    <property type="term" value="C:dendrite"/>
    <property type="evidence" value="ECO:0000250"/>
    <property type="project" value="ARUK-UCL"/>
</dbReference>
<dbReference type="GO" id="GO:0070062">
    <property type="term" value="C:extracellular exosome"/>
    <property type="evidence" value="ECO:0007005"/>
    <property type="project" value="UniProtKB"/>
</dbReference>
<dbReference type="GO" id="GO:0001650">
    <property type="term" value="C:fibrillar center"/>
    <property type="evidence" value="ECO:0000314"/>
    <property type="project" value="HPA"/>
</dbReference>
<dbReference type="GO" id="GO:0031941">
    <property type="term" value="C:filamentous actin"/>
    <property type="evidence" value="ECO:0000314"/>
    <property type="project" value="UniProtKB"/>
</dbReference>
<dbReference type="GO" id="GO:0030426">
    <property type="term" value="C:growth cone"/>
    <property type="evidence" value="ECO:0007669"/>
    <property type="project" value="Ensembl"/>
</dbReference>
<dbReference type="GO" id="GO:0005770">
    <property type="term" value="C:late endosome"/>
    <property type="evidence" value="ECO:0007669"/>
    <property type="project" value="Ensembl"/>
</dbReference>
<dbReference type="GO" id="GO:0031594">
    <property type="term" value="C:neuromuscular junction"/>
    <property type="evidence" value="ECO:0007669"/>
    <property type="project" value="Ensembl"/>
</dbReference>
<dbReference type="GO" id="GO:0005641">
    <property type="term" value="C:nuclear envelope lumen"/>
    <property type="evidence" value="ECO:0007669"/>
    <property type="project" value="Ensembl"/>
</dbReference>
<dbReference type="GO" id="GO:0005886">
    <property type="term" value="C:plasma membrane"/>
    <property type="evidence" value="ECO:0000314"/>
    <property type="project" value="HPA"/>
</dbReference>
<dbReference type="GO" id="GO:0002102">
    <property type="term" value="C:podosome"/>
    <property type="evidence" value="ECO:0007669"/>
    <property type="project" value="Ensembl"/>
</dbReference>
<dbReference type="GO" id="GO:0001726">
    <property type="term" value="C:ruffle"/>
    <property type="evidence" value="ECO:0000314"/>
    <property type="project" value="UniProtKB"/>
</dbReference>
<dbReference type="GO" id="GO:0036057">
    <property type="term" value="C:slit diaphragm"/>
    <property type="evidence" value="ECO:0007669"/>
    <property type="project" value="Ensembl"/>
</dbReference>
<dbReference type="GO" id="GO:0032588">
    <property type="term" value="C:trans-Golgi network membrane"/>
    <property type="evidence" value="ECO:0007669"/>
    <property type="project" value="Ensembl"/>
</dbReference>
<dbReference type="GO" id="GO:0031982">
    <property type="term" value="C:vesicle"/>
    <property type="evidence" value="ECO:0000318"/>
    <property type="project" value="GO_Central"/>
</dbReference>
<dbReference type="GO" id="GO:0051015">
    <property type="term" value="F:actin filament binding"/>
    <property type="evidence" value="ECO:0007669"/>
    <property type="project" value="Ensembl"/>
</dbReference>
<dbReference type="GO" id="GO:0045296">
    <property type="term" value="F:cadherin binding"/>
    <property type="evidence" value="ECO:0007005"/>
    <property type="project" value="BHF-UCL"/>
</dbReference>
<dbReference type="GO" id="GO:0030276">
    <property type="term" value="F:clathrin binding"/>
    <property type="evidence" value="ECO:0007669"/>
    <property type="project" value="Ensembl"/>
</dbReference>
<dbReference type="GO" id="GO:0042802">
    <property type="term" value="F:identical protein binding"/>
    <property type="evidence" value="ECO:0000353"/>
    <property type="project" value="IntAct"/>
</dbReference>
<dbReference type="GO" id="GO:0036312">
    <property type="term" value="F:phosphatidylinositol 3-kinase regulatory subunit binding"/>
    <property type="evidence" value="ECO:0007669"/>
    <property type="project" value="Ensembl"/>
</dbReference>
<dbReference type="GO" id="GO:0017124">
    <property type="term" value="F:SH3 domain binding"/>
    <property type="evidence" value="ECO:0000353"/>
    <property type="project" value="UniProtKB"/>
</dbReference>
<dbReference type="GO" id="GO:0005200">
    <property type="term" value="F:structural constituent of cytoskeleton"/>
    <property type="evidence" value="ECO:0000304"/>
    <property type="project" value="ProtInc"/>
</dbReference>
<dbReference type="GO" id="GO:0007015">
    <property type="term" value="P:actin filament organization"/>
    <property type="evidence" value="ECO:0000315"/>
    <property type="project" value="UniProtKB"/>
</dbReference>
<dbReference type="GO" id="GO:0030041">
    <property type="term" value="P:actin filament polymerization"/>
    <property type="evidence" value="ECO:0007669"/>
    <property type="project" value="Ensembl"/>
</dbReference>
<dbReference type="GO" id="GO:0060612">
    <property type="term" value="P:adipose tissue development"/>
    <property type="evidence" value="ECO:0007669"/>
    <property type="project" value="Ensembl"/>
</dbReference>
<dbReference type="GO" id="GO:0006915">
    <property type="term" value="P:apoptotic process"/>
    <property type="evidence" value="ECO:0007669"/>
    <property type="project" value="Ensembl"/>
</dbReference>
<dbReference type="GO" id="GO:0051301">
    <property type="term" value="P:cell division"/>
    <property type="evidence" value="ECO:0007669"/>
    <property type="project" value="UniProtKB-KW"/>
</dbReference>
<dbReference type="GO" id="GO:0016477">
    <property type="term" value="P:cell migration"/>
    <property type="evidence" value="ECO:0000318"/>
    <property type="project" value="GO_Central"/>
</dbReference>
<dbReference type="GO" id="GO:0008283">
    <property type="term" value="P:cell population proliferation"/>
    <property type="evidence" value="ECO:0007669"/>
    <property type="project" value="Ensembl"/>
</dbReference>
<dbReference type="GO" id="GO:0044331">
    <property type="term" value="P:cell-cell adhesion mediated by cadherin"/>
    <property type="evidence" value="ECO:0007669"/>
    <property type="project" value="Ensembl"/>
</dbReference>
<dbReference type="GO" id="GO:0045216">
    <property type="term" value="P:cell-cell junction organization"/>
    <property type="evidence" value="ECO:0007669"/>
    <property type="project" value="Ensembl"/>
</dbReference>
<dbReference type="GO" id="GO:0048668">
    <property type="term" value="P:collateral sprouting"/>
    <property type="evidence" value="ECO:0007669"/>
    <property type="project" value="Ensembl"/>
</dbReference>
<dbReference type="GO" id="GO:0046323">
    <property type="term" value="P:D-glucose import"/>
    <property type="evidence" value="ECO:0007669"/>
    <property type="project" value="Ensembl"/>
</dbReference>
<dbReference type="GO" id="GO:0003158">
    <property type="term" value="P:endothelium development"/>
    <property type="evidence" value="ECO:0007669"/>
    <property type="project" value="Ensembl"/>
</dbReference>
<dbReference type="GO" id="GO:0070371">
    <property type="term" value="P:ERK1 and ERK2 cascade"/>
    <property type="evidence" value="ECO:0007669"/>
    <property type="project" value="Ensembl"/>
</dbReference>
<dbReference type="GO" id="GO:0046847">
    <property type="term" value="P:filopodium assembly"/>
    <property type="evidence" value="ECO:0007669"/>
    <property type="project" value="Ensembl"/>
</dbReference>
<dbReference type="GO" id="GO:0001771">
    <property type="term" value="P:immunological synapse formation"/>
    <property type="evidence" value="ECO:0007669"/>
    <property type="project" value="Ensembl"/>
</dbReference>
<dbReference type="GO" id="GO:0006954">
    <property type="term" value="P:inflammatory response"/>
    <property type="evidence" value="ECO:0007669"/>
    <property type="project" value="Ensembl"/>
</dbReference>
<dbReference type="GO" id="GO:0006629">
    <property type="term" value="P:lipid metabolic process"/>
    <property type="evidence" value="ECO:0007669"/>
    <property type="project" value="Ensembl"/>
</dbReference>
<dbReference type="GO" id="GO:0001889">
    <property type="term" value="P:liver development"/>
    <property type="evidence" value="ECO:0007669"/>
    <property type="project" value="Ensembl"/>
</dbReference>
<dbReference type="GO" id="GO:0051674">
    <property type="term" value="P:localization of cell"/>
    <property type="evidence" value="ECO:0007669"/>
    <property type="project" value="Ensembl"/>
</dbReference>
<dbReference type="GO" id="GO:0048535">
    <property type="term" value="P:lymph node development"/>
    <property type="evidence" value="ECO:0007669"/>
    <property type="project" value="Ensembl"/>
</dbReference>
<dbReference type="GO" id="GO:0035633">
    <property type="term" value="P:maintenance of blood-brain barrier"/>
    <property type="evidence" value="ECO:0007669"/>
    <property type="project" value="Ensembl"/>
</dbReference>
<dbReference type="GO" id="GO:0008584">
    <property type="term" value="P:male gonad development"/>
    <property type="evidence" value="ECO:0007669"/>
    <property type="project" value="Ensembl"/>
</dbReference>
<dbReference type="GO" id="GO:0061024">
    <property type="term" value="P:membrane organization"/>
    <property type="evidence" value="ECO:0007669"/>
    <property type="project" value="Ensembl"/>
</dbReference>
<dbReference type="GO" id="GO:0043524">
    <property type="term" value="P:negative regulation of neuron apoptotic process"/>
    <property type="evidence" value="ECO:0007669"/>
    <property type="project" value="Ensembl"/>
</dbReference>
<dbReference type="GO" id="GO:0051058">
    <property type="term" value="P:negative regulation of small GTPase mediated signal transduction"/>
    <property type="evidence" value="ECO:0000315"/>
    <property type="project" value="UniProtKB"/>
</dbReference>
<dbReference type="GO" id="GO:0032911">
    <property type="term" value="P:negative regulation of transforming growth factor beta1 production"/>
    <property type="evidence" value="ECO:0007669"/>
    <property type="project" value="Ensembl"/>
</dbReference>
<dbReference type="GO" id="GO:0038180">
    <property type="term" value="P:nerve growth factor signaling pathway"/>
    <property type="evidence" value="ECO:0007669"/>
    <property type="project" value="Ensembl"/>
</dbReference>
<dbReference type="GO" id="GO:0048011">
    <property type="term" value="P:neurotrophin TRK receptor signaling pathway"/>
    <property type="evidence" value="ECO:0007669"/>
    <property type="project" value="Ensembl"/>
</dbReference>
<dbReference type="GO" id="GO:0043491">
    <property type="term" value="P:phosphatidylinositol 3-kinase/protein kinase B signal transduction"/>
    <property type="evidence" value="ECO:0007669"/>
    <property type="project" value="Ensembl"/>
</dbReference>
<dbReference type="GO" id="GO:0072112">
    <property type="term" value="P:podocyte differentiation"/>
    <property type="evidence" value="ECO:0007669"/>
    <property type="project" value="Ensembl"/>
</dbReference>
<dbReference type="GO" id="GO:1900182">
    <property type="term" value="P:positive regulation of protein localization to nucleus"/>
    <property type="evidence" value="ECO:0007669"/>
    <property type="project" value="Ensembl"/>
</dbReference>
<dbReference type="GO" id="GO:0050714">
    <property type="term" value="P:positive regulation of protein secretion"/>
    <property type="evidence" value="ECO:0000315"/>
    <property type="project" value="UniProtKB"/>
</dbReference>
<dbReference type="GO" id="GO:0030163">
    <property type="term" value="P:protein catabolic process"/>
    <property type="evidence" value="ECO:0007669"/>
    <property type="project" value="Ensembl"/>
</dbReference>
<dbReference type="GO" id="GO:0051291">
    <property type="term" value="P:protein heterooligomerization"/>
    <property type="evidence" value="ECO:0007669"/>
    <property type="project" value="Ensembl"/>
</dbReference>
<dbReference type="GO" id="GO:0009306">
    <property type="term" value="P:protein secretion"/>
    <property type="evidence" value="ECO:0007669"/>
    <property type="project" value="Ensembl"/>
</dbReference>
<dbReference type="GO" id="GO:0065003">
    <property type="term" value="P:protein-containing complex assembly"/>
    <property type="evidence" value="ECO:0000304"/>
    <property type="project" value="ProtInc"/>
</dbReference>
<dbReference type="GO" id="GO:0032482">
    <property type="term" value="P:Rab protein signal transduction"/>
    <property type="evidence" value="ECO:0007669"/>
    <property type="project" value="Ensembl"/>
</dbReference>
<dbReference type="GO" id="GO:0032956">
    <property type="term" value="P:regulation of actin cytoskeleton organization"/>
    <property type="evidence" value="ECO:0007669"/>
    <property type="project" value="Ensembl"/>
</dbReference>
<dbReference type="GO" id="GO:0048167">
    <property type="term" value="P:regulation of synaptic plasticity"/>
    <property type="evidence" value="ECO:0007669"/>
    <property type="project" value="Ensembl"/>
</dbReference>
<dbReference type="GO" id="GO:0097018">
    <property type="term" value="P:renal albumin absorption"/>
    <property type="evidence" value="ECO:0007669"/>
    <property type="project" value="Ensembl"/>
</dbReference>
<dbReference type="GO" id="GO:1990790">
    <property type="term" value="P:response to glial cell derived neurotrophic factor"/>
    <property type="evidence" value="ECO:0007669"/>
    <property type="project" value="Ensembl"/>
</dbReference>
<dbReference type="GO" id="GO:0032868">
    <property type="term" value="P:response to insulin"/>
    <property type="evidence" value="ECO:0007669"/>
    <property type="project" value="Ensembl"/>
</dbReference>
<dbReference type="GO" id="GO:0006979">
    <property type="term" value="P:response to oxidative stress"/>
    <property type="evidence" value="ECO:0007669"/>
    <property type="project" value="Ensembl"/>
</dbReference>
<dbReference type="GO" id="GO:0071559">
    <property type="term" value="P:response to transforming growth factor beta"/>
    <property type="evidence" value="ECO:0007669"/>
    <property type="project" value="Ensembl"/>
</dbReference>
<dbReference type="GO" id="GO:0009615">
    <property type="term" value="P:response to virus"/>
    <property type="evidence" value="ECO:0007669"/>
    <property type="project" value="Ensembl"/>
</dbReference>
<dbReference type="GO" id="GO:0009611">
    <property type="term" value="P:response to wounding"/>
    <property type="evidence" value="ECO:0007669"/>
    <property type="project" value="Ensembl"/>
</dbReference>
<dbReference type="GO" id="GO:0007165">
    <property type="term" value="P:signal transduction"/>
    <property type="evidence" value="ECO:0000303"/>
    <property type="project" value="ProtInc"/>
</dbReference>
<dbReference type="GO" id="GO:0051403">
    <property type="term" value="P:stress-activated MAPK cascade"/>
    <property type="evidence" value="ECO:0007669"/>
    <property type="project" value="Ensembl"/>
</dbReference>
<dbReference type="GO" id="GO:0006930">
    <property type="term" value="P:substrate-dependent cell migration, cell extension"/>
    <property type="evidence" value="ECO:0000304"/>
    <property type="project" value="ProtInc"/>
</dbReference>
<dbReference type="GO" id="GO:0050808">
    <property type="term" value="P:synapse organization"/>
    <property type="evidence" value="ECO:0007669"/>
    <property type="project" value="Ensembl"/>
</dbReference>
<dbReference type="GO" id="GO:0050852">
    <property type="term" value="P:T cell receptor signaling pathway"/>
    <property type="evidence" value="ECO:0007669"/>
    <property type="project" value="Ensembl"/>
</dbReference>
<dbReference type="GO" id="GO:0032905">
    <property type="term" value="P:transforming growth factor beta1 production"/>
    <property type="evidence" value="ECO:0007669"/>
    <property type="project" value="Ensembl"/>
</dbReference>
<dbReference type="CDD" id="cd12053">
    <property type="entry name" value="SH3_CD2AP_1"/>
    <property type="match status" value="1"/>
</dbReference>
<dbReference type="CDD" id="cd12054">
    <property type="entry name" value="SH3_CD2AP_2"/>
    <property type="match status" value="1"/>
</dbReference>
<dbReference type="CDD" id="cd12056">
    <property type="entry name" value="SH3_CD2AP_3"/>
    <property type="match status" value="1"/>
</dbReference>
<dbReference type="FunFam" id="2.30.30.40:FF:000094">
    <property type="entry name" value="SH3 domain-containing kinase-binding protein 1"/>
    <property type="match status" value="1"/>
</dbReference>
<dbReference type="FunFam" id="2.30.30.40:FF:000112">
    <property type="entry name" value="SH3 domain-containing kinase-binding protein 1"/>
    <property type="match status" value="1"/>
</dbReference>
<dbReference type="FunFam" id="2.30.30.40:FF:000072">
    <property type="entry name" value="Unconventional Myosin IB"/>
    <property type="match status" value="1"/>
</dbReference>
<dbReference type="Gene3D" id="2.30.30.40">
    <property type="entry name" value="SH3 Domains"/>
    <property type="match status" value="3"/>
</dbReference>
<dbReference type="InterPro" id="IPR035775">
    <property type="entry name" value="CD2AP_SH3_1"/>
</dbReference>
<dbReference type="InterPro" id="IPR035777">
    <property type="entry name" value="CD2AP_SH3_3"/>
</dbReference>
<dbReference type="InterPro" id="IPR035776">
    <property type="entry name" value="CD2AP_SH_2"/>
</dbReference>
<dbReference type="InterPro" id="IPR050384">
    <property type="entry name" value="Endophilin_SH3RF"/>
</dbReference>
<dbReference type="InterPro" id="IPR036028">
    <property type="entry name" value="SH3-like_dom_sf"/>
</dbReference>
<dbReference type="InterPro" id="IPR001452">
    <property type="entry name" value="SH3_domain"/>
</dbReference>
<dbReference type="PANTHER" id="PTHR14167:SF92">
    <property type="entry name" value="CIN85 AND CD2AP RELATED, ISOFORM J"/>
    <property type="match status" value="1"/>
</dbReference>
<dbReference type="PANTHER" id="PTHR14167">
    <property type="entry name" value="SH3 DOMAIN-CONTAINING"/>
    <property type="match status" value="1"/>
</dbReference>
<dbReference type="Pfam" id="PF00018">
    <property type="entry name" value="SH3_1"/>
    <property type="match status" value="1"/>
</dbReference>
<dbReference type="Pfam" id="PF14604">
    <property type="entry name" value="SH3_9"/>
    <property type="match status" value="2"/>
</dbReference>
<dbReference type="PRINTS" id="PR00452">
    <property type="entry name" value="SH3DOMAIN"/>
</dbReference>
<dbReference type="SMART" id="SM00326">
    <property type="entry name" value="SH3"/>
    <property type="match status" value="3"/>
</dbReference>
<dbReference type="SUPFAM" id="SSF50044">
    <property type="entry name" value="SH3-domain"/>
    <property type="match status" value="3"/>
</dbReference>
<dbReference type="PROSITE" id="PS50002">
    <property type="entry name" value="SH3"/>
    <property type="match status" value="3"/>
</dbReference>
<accession>Q9Y5K6</accession>
<accession>A6NL34</accession>
<accession>Q5VYA3</accession>
<accession>Q9UG97</accession>
<gene>
    <name type="primary">CD2AP</name>
</gene>